<protein>
    <recommendedName>
        <fullName>Securin</fullName>
    </recommendedName>
    <alternativeName>
        <fullName>Esp1-associated protein</fullName>
    </alternativeName>
    <alternativeName>
        <fullName>Pituitary tumor-transforming gene 1 protein</fullName>
        <shortName>Tumor-transforming protein 1</shortName>
        <shortName>hPTTG</shortName>
    </alternativeName>
</protein>
<gene>
    <name type="primary">PTTG1</name>
    <name type="synonym">EAP1</name>
    <name type="synonym">PTTG</name>
    <name type="synonym">TUTR1</name>
</gene>
<dbReference type="EMBL" id="AJ223953">
    <property type="protein sequence ID" value="CAA11683.1"/>
    <property type="molecule type" value="mRNA"/>
</dbReference>
<dbReference type="EMBL" id="AF095287">
    <property type="protein sequence ID" value="AAC64409.1"/>
    <property type="molecule type" value="mRNA"/>
</dbReference>
<dbReference type="EMBL" id="AF075242">
    <property type="protein sequence ID" value="AAD19335.1"/>
    <property type="molecule type" value="mRNA"/>
</dbReference>
<dbReference type="EMBL" id="AF167564">
    <property type="protein sequence ID" value="AAF06995.1"/>
    <property type="molecule type" value="Genomic_DNA"/>
</dbReference>
<dbReference type="EMBL" id="AF167560">
    <property type="protein sequence ID" value="AAF06995.1"/>
    <property type="status" value="JOINED"/>
    <property type="molecule type" value="Genomic_DNA"/>
</dbReference>
<dbReference type="EMBL" id="AF167561">
    <property type="protein sequence ID" value="AAF06995.1"/>
    <property type="status" value="JOINED"/>
    <property type="molecule type" value="Genomic_DNA"/>
</dbReference>
<dbReference type="EMBL" id="AF167562">
    <property type="protein sequence ID" value="AAF06995.1"/>
    <property type="status" value="JOINED"/>
    <property type="molecule type" value="Genomic_DNA"/>
</dbReference>
<dbReference type="EMBL" id="AF167563">
    <property type="protein sequence ID" value="AAF06995.1"/>
    <property type="status" value="JOINED"/>
    <property type="molecule type" value="Genomic_DNA"/>
</dbReference>
<dbReference type="CCDS" id="CCDS4353.1"/>
<dbReference type="RefSeq" id="NP_001269311.1">
    <property type="nucleotide sequence ID" value="NM_001282382.1"/>
</dbReference>
<dbReference type="RefSeq" id="NP_001269312.1">
    <property type="nucleotide sequence ID" value="NM_001282383.1"/>
</dbReference>
<dbReference type="RefSeq" id="NP_004210.1">
    <property type="nucleotide sequence ID" value="NM_004219.4"/>
</dbReference>
<dbReference type="PDB" id="7NJ0">
    <property type="method" value="EM"/>
    <property type="resolution" value="3.60 A"/>
    <property type="chains" value="A=159-202"/>
</dbReference>
<dbReference type="PDB" id="7NJ1">
    <property type="method" value="EM"/>
    <property type="resolution" value="2.90 A"/>
    <property type="chains" value="B=1-202"/>
</dbReference>
<dbReference type="PDBsum" id="7NJ0"/>
<dbReference type="PDBsum" id="7NJ1"/>
<dbReference type="EMDB" id="EMD-12369"/>
<dbReference type="SMR" id="O95997"/>
<dbReference type="BioGRID" id="114663">
    <property type="interactions" value="123"/>
</dbReference>
<dbReference type="CORUM" id="O95997"/>
<dbReference type="DIP" id="DIP-56460N"/>
<dbReference type="ELM" id="O95997"/>
<dbReference type="FunCoup" id="O95997">
    <property type="interactions" value="1771"/>
</dbReference>
<dbReference type="IntAct" id="O95997">
    <property type="interactions" value="21"/>
</dbReference>
<dbReference type="MINT" id="O95997"/>
<dbReference type="STRING" id="9606.ENSP00000377536"/>
<dbReference type="iPTMnet" id="O95997"/>
<dbReference type="PhosphoSitePlus" id="O95997"/>
<dbReference type="BioMuta" id="PTTG1"/>
<dbReference type="jPOST" id="O95997"/>
<dbReference type="MassIVE" id="O95997"/>
<dbReference type="PaxDb" id="9606-ENSP00000377536"/>
<dbReference type="PeptideAtlas" id="O95997"/>
<dbReference type="ProteomicsDB" id="51174"/>
<dbReference type="Pumba" id="O95997"/>
<dbReference type="Antibodypedia" id="1853">
    <property type="antibodies" value="438 antibodies from 39 providers"/>
</dbReference>
<dbReference type="DNASU" id="9232"/>
<dbReference type="Ensembl" id="ENST00000352433.10">
    <property type="protein sequence ID" value="ENSP00000344936.5"/>
    <property type="gene ID" value="ENSG00000164611.13"/>
</dbReference>
<dbReference type="Ensembl" id="ENST00000393964.1">
    <property type="protein sequence ID" value="ENSP00000377536.1"/>
    <property type="gene ID" value="ENSG00000164611.13"/>
</dbReference>
<dbReference type="Ensembl" id="ENST00000520452.5">
    <property type="protein sequence ID" value="ENSP00000430642.1"/>
    <property type="gene ID" value="ENSG00000164611.13"/>
</dbReference>
<dbReference type="GeneID" id="9232"/>
<dbReference type="KEGG" id="hsa:9232"/>
<dbReference type="MANE-Select" id="ENST00000352433.10">
    <property type="protein sequence ID" value="ENSP00000344936.5"/>
    <property type="RefSeq nucleotide sequence ID" value="NM_004219.4"/>
    <property type="RefSeq protein sequence ID" value="NP_004210.1"/>
</dbReference>
<dbReference type="AGR" id="HGNC:9690"/>
<dbReference type="CTD" id="9232"/>
<dbReference type="DisGeNET" id="9232"/>
<dbReference type="GeneCards" id="PTTG1"/>
<dbReference type="HGNC" id="HGNC:9690">
    <property type="gene designation" value="PTTG1"/>
</dbReference>
<dbReference type="HPA" id="ENSG00000164611">
    <property type="expression patterns" value="Tissue enhanced (bone marrow, lymphoid tissue, testis)"/>
</dbReference>
<dbReference type="MIM" id="604147">
    <property type="type" value="gene"/>
</dbReference>
<dbReference type="neXtProt" id="NX_O95997"/>
<dbReference type="OpenTargets" id="ENSG00000164611"/>
<dbReference type="PharmGKB" id="PA34033"/>
<dbReference type="VEuPathDB" id="HostDB:ENSG00000164611"/>
<dbReference type="eggNOG" id="ENOG502S2GG">
    <property type="taxonomic scope" value="Eukaryota"/>
</dbReference>
<dbReference type="GeneTree" id="ENSGT00390000009693"/>
<dbReference type="HOGENOM" id="CLU_1363209_0_0_1"/>
<dbReference type="InParanoid" id="O95997"/>
<dbReference type="OMA" id="PPVCYDF"/>
<dbReference type="OrthoDB" id="9905975at2759"/>
<dbReference type="PAN-GO" id="O95997">
    <property type="GO annotations" value="3 GO annotations based on evolutionary models"/>
</dbReference>
<dbReference type="PhylomeDB" id="O95997"/>
<dbReference type="TreeFam" id="TF330797"/>
<dbReference type="PathwayCommons" id="O95997"/>
<dbReference type="Reactome" id="R-HSA-174154">
    <property type="pathway name" value="APC/C:Cdc20 mediated degradation of Securin"/>
</dbReference>
<dbReference type="Reactome" id="R-HSA-174178">
    <property type="pathway name" value="APC/C:Cdh1 mediated degradation of Cdc20 and other APC/C:Cdh1 targeted proteins in late mitosis/early G1"/>
</dbReference>
<dbReference type="Reactome" id="R-HSA-2467813">
    <property type="pathway name" value="Separation of Sister Chromatids"/>
</dbReference>
<dbReference type="SignaLink" id="O95997"/>
<dbReference type="SIGNOR" id="O95997"/>
<dbReference type="BioGRID-ORCS" id="9232">
    <property type="hits" value="312 hits in 1165 CRISPR screens"/>
</dbReference>
<dbReference type="CD-CODE" id="8C2F96ED">
    <property type="entry name" value="Centrosome"/>
</dbReference>
<dbReference type="ChiTaRS" id="PTTG1">
    <property type="organism name" value="human"/>
</dbReference>
<dbReference type="GeneWiki" id="PTTG1"/>
<dbReference type="GenomeRNAi" id="9232"/>
<dbReference type="Pharos" id="O95997">
    <property type="development level" value="Tbio"/>
</dbReference>
<dbReference type="PRO" id="PR:O95997"/>
<dbReference type="Proteomes" id="UP000005640">
    <property type="component" value="Chromosome 5"/>
</dbReference>
<dbReference type="RNAct" id="O95997">
    <property type="molecule type" value="protein"/>
</dbReference>
<dbReference type="Bgee" id="ENSG00000164611">
    <property type="expression patterns" value="Expressed in secondary oocyte and 170 other cell types or tissues"/>
</dbReference>
<dbReference type="ExpressionAtlas" id="O95997">
    <property type="expression patterns" value="baseline and differential"/>
</dbReference>
<dbReference type="GO" id="GO:0005737">
    <property type="term" value="C:cytoplasm"/>
    <property type="evidence" value="ECO:0000304"/>
    <property type="project" value="ProtInc"/>
</dbReference>
<dbReference type="GO" id="GO:0005829">
    <property type="term" value="C:cytosol"/>
    <property type="evidence" value="ECO:0000314"/>
    <property type="project" value="CAFA"/>
</dbReference>
<dbReference type="GO" id="GO:0005634">
    <property type="term" value="C:nucleus"/>
    <property type="evidence" value="ECO:0000314"/>
    <property type="project" value="CAFA"/>
</dbReference>
<dbReference type="GO" id="GO:0004869">
    <property type="term" value="F:cysteine-type endopeptidase inhibitor activity"/>
    <property type="evidence" value="ECO:0000303"/>
    <property type="project" value="UniProtKB"/>
</dbReference>
<dbReference type="GO" id="GO:0140677">
    <property type="term" value="F:molecular function activator activity"/>
    <property type="evidence" value="ECO:0000269"/>
    <property type="project" value="DisProt"/>
</dbReference>
<dbReference type="GO" id="GO:0017124">
    <property type="term" value="F:SH3 domain binding"/>
    <property type="evidence" value="ECO:0007669"/>
    <property type="project" value="UniProtKB-KW"/>
</dbReference>
<dbReference type="GO" id="GO:0051301">
    <property type="term" value="P:cell division"/>
    <property type="evidence" value="ECO:0007669"/>
    <property type="project" value="UniProtKB-KW"/>
</dbReference>
<dbReference type="GO" id="GO:0051276">
    <property type="term" value="P:chromosome organization"/>
    <property type="evidence" value="ECO:0007669"/>
    <property type="project" value="InterPro"/>
</dbReference>
<dbReference type="GO" id="GO:0006281">
    <property type="term" value="P:DNA repair"/>
    <property type="evidence" value="ECO:0007669"/>
    <property type="project" value="UniProtKB-KW"/>
</dbReference>
<dbReference type="GO" id="GO:0045143">
    <property type="term" value="P:homologous chromosome segregation"/>
    <property type="evidence" value="ECO:0000318"/>
    <property type="project" value="GO_Central"/>
</dbReference>
<dbReference type="GO" id="GO:0007283">
    <property type="term" value="P:spermatogenesis"/>
    <property type="evidence" value="ECO:0000304"/>
    <property type="project" value="ProtInc"/>
</dbReference>
<dbReference type="DisProt" id="DP00521"/>
<dbReference type="InterPro" id="IPR006940">
    <property type="entry name" value="Securin_separation_inhibitor"/>
</dbReference>
<dbReference type="PANTHER" id="PTHR10418:SF7">
    <property type="entry name" value="SECURIN"/>
    <property type="match status" value="1"/>
</dbReference>
<dbReference type="PANTHER" id="PTHR10418">
    <property type="entry name" value="SECURIN-3"/>
    <property type="match status" value="1"/>
</dbReference>
<dbReference type="Pfam" id="PF04856">
    <property type="entry name" value="Securin"/>
    <property type="match status" value="1"/>
</dbReference>
<comment type="function">
    <text evidence="3 6 7 8">Regulatory protein, which plays a central role in chromosome stability, in the p53/TP53 pathway, and DNA repair. Probably acts by blocking the action of key proteins. During the mitosis, it blocks Separase/ESPL1 function, preventing the proteolysis of the cohesin complex and the subsequent segregation of the chromosomes. At the onset of anaphase, it is ubiquitinated, conducting to its destruction and to the liberation of ESPL1. Its function is however not limited to a blocking activity, since it is required to activate ESPL1. Negatively regulates the transcriptional activity and related apoptosis activity of TP53. The negative regulation of TP53 may explain the strong transforming capability of the protein when it is overexpressed. May also play a role in DNA repair via its interaction with Ku, possibly by connecting DNA damage-response pathways with sister chromatid separation.</text>
</comment>
<comment type="subunit">
    <text evidence="1 3 5 6 8">Interacts with RPS10 and DNAJA1 (By similarity). Interacts with the caspase-like ESPL1, and prevents its protease activity probably by covering its active site. Interacts with TP53 and blocks its activity probably by blocking its binding to DNA. Interacts with the Ku 70 kDa subunit of ds-DNA kinase. Interacts with PTTG1IP.</text>
</comment>
<comment type="subcellular location">
    <subcellularLocation>
        <location>Cytoplasm</location>
    </subcellularLocation>
    <subcellularLocation>
        <location>Nucleus</location>
    </subcellularLocation>
</comment>
<comment type="tissue specificity">
    <text evidence="10">Expressed at low level in most tissues, except in adult testis, where it is highly expressed. Overexpressed in many patients suffering from pituitary adenomas, primary epithelial neoplasias, and esophageal cancer.</text>
</comment>
<comment type="developmental stage">
    <text>Low level during G1 and S phases. Peaks at M phase. During anaphase, it is degraded.</text>
</comment>
<comment type="domain">
    <text evidence="1">The N-terminal destruction box (D-box) acts as a recognition signal for degradation via the ubiquitin-proteasome pathway.</text>
</comment>
<comment type="domain">
    <text evidence="9">The TEK-boxes are required for 'Lys-11'-linked ubiquitination and facilitate the transfer of the first ubiquitin and ubiquitin chain nucleation. TEK-boxes may direct a catalytically competent orientation of the UBE2C/UBCH10-ubiquitin thioester with the acceptor lysine residue.</text>
</comment>
<comment type="PTM">
    <text evidence="4">Phosphorylated at Ser-165 by CDK1 during mitosis.</text>
</comment>
<comment type="PTM">
    <text evidence="4">Phosphorylated in vitro by ds-DNA kinase.</text>
</comment>
<comment type="PTM">
    <text evidence="3 9">Ubiquitinated through 'Lys-11' linkage of ubiquitin moieties by the anaphase promoting complex (APC) at the onset of anaphase, conducting to its degradation. 'Lys-11'-linked ubiquitination is mediated by the E2 ligase UBE2C/UBCH10.</text>
</comment>
<comment type="similarity">
    <text evidence="12">Belongs to the securin family.</text>
</comment>
<comment type="online information" name="Atlas of Genetics and Cytogenetics in Oncology and Haematology">
    <link uri="https://atlasgeneticsoncology.org/gene/41943/PTTG1"/>
</comment>
<keyword id="KW-0002">3D-structure</keyword>
<keyword id="KW-0007">Acetylation</keyword>
<keyword id="KW-0131">Cell cycle</keyword>
<keyword id="KW-0132">Cell division</keyword>
<keyword id="KW-0159">Chromosome partition</keyword>
<keyword id="KW-0963">Cytoplasm</keyword>
<keyword id="KW-0227">DNA damage</keyword>
<keyword id="KW-0234">DNA repair</keyword>
<keyword id="KW-0498">Mitosis</keyword>
<keyword id="KW-0539">Nucleus</keyword>
<keyword id="KW-0597">Phosphoprotein</keyword>
<keyword id="KW-1267">Proteomics identification</keyword>
<keyword id="KW-0656">Proto-oncogene</keyword>
<keyword id="KW-1185">Reference proteome</keyword>
<keyword id="KW-0677">Repeat</keyword>
<keyword id="KW-0729">SH3-binding</keyword>
<keyword id="KW-0832">Ubl conjugation</keyword>
<sequence>MATLIYVDKENGEPGTRVVAKDGLKLGSGPSIKALDGRSQVSTPRFGKTFDAPPALPKATRKALGTVNRATEKSVKTKGPLKQKQPSFSAKKMTEKTVKAKSSVPASDDAYPEIEKFFPFNPLDFESFDLPEEHQIAHLPLSGVPLMILDEERELEKLFQLGPPSPVKMPSPPWESNLLQSPSSILSTLDVELPPVCCDIDI</sequence>
<feature type="initiator methionine" description="Removed" evidence="13">
    <location>
        <position position="1"/>
    </location>
</feature>
<feature type="chain" id="PRO_0000206361" description="Securin">
    <location>
        <begin position="2"/>
        <end position="202"/>
    </location>
</feature>
<feature type="region of interest" description="Disordered" evidence="2">
    <location>
        <begin position="35"/>
        <end position="90"/>
    </location>
</feature>
<feature type="short sequence motif" description="D-box">
    <location>
        <begin position="61"/>
        <end position="64"/>
    </location>
</feature>
<feature type="short sequence motif" description="TEK-box 1">
    <location>
        <begin position="71"/>
        <end position="73"/>
    </location>
</feature>
<feature type="short sequence motif" description="TEK-box 2">
    <location>
        <begin position="94"/>
        <end position="96"/>
    </location>
</feature>
<feature type="short sequence motif" description="SH3-binding">
    <location>
        <begin position="163"/>
        <end position="173"/>
    </location>
</feature>
<feature type="modified residue" description="N-acetylalanine" evidence="13">
    <location>
        <position position="2"/>
    </location>
</feature>
<feature type="modified residue" description="Phosphoserine; by CDK1" evidence="4">
    <location>
        <position position="165"/>
    </location>
</feature>
<feature type="mutagenesis site" description="Abolishes ubiquitination and subsequent degradation; when associated with A-64." evidence="3">
    <original>R</original>
    <variation>A</variation>
    <location>
        <position position="61"/>
    </location>
</feature>
<feature type="mutagenesis site" description="Abolishes ubiquitination and subsequent degradation; when associated with A-61." evidence="3">
    <original>L</original>
    <variation>A</variation>
    <location>
        <position position="64"/>
    </location>
</feature>
<feature type="mutagenesis site" description="Strongly reduces transforming capability; when associated with L-170; A-172 and L-173." evidence="11">
    <original>P</original>
    <variation>A</variation>
    <location>
        <position position="163"/>
    </location>
</feature>
<feature type="mutagenesis site" description="Abolishes phosphorylation." evidence="4">
    <original>S</original>
    <variation>A</variation>
    <location>
        <position position="165"/>
    </location>
</feature>
<feature type="mutagenesis site" description="Strongly reduces transforming capability; when associated with A-163." evidence="11">
    <original>PSPP</original>
    <variation>LSAL</variation>
    <location>
        <begin position="170"/>
        <end position="173"/>
    </location>
</feature>
<feature type="helix" evidence="14">
    <location>
        <begin position="122"/>
        <end position="125"/>
    </location>
</feature>
<feature type="strand" evidence="14">
    <location>
        <begin position="132"/>
        <end position="134"/>
    </location>
</feature>
<accession>O95997</accession>
<organism>
    <name type="scientific">Homo sapiens</name>
    <name type="common">Human</name>
    <dbReference type="NCBI Taxonomy" id="9606"/>
    <lineage>
        <taxon>Eukaryota</taxon>
        <taxon>Metazoa</taxon>
        <taxon>Chordata</taxon>
        <taxon>Craniata</taxon>
        <taxon>Vertebrata</taxon>
        <taxon>Euteleostomi</taxon>
        <taxon>Mammalia</taxon>
        <taxon>Eutheria</taxon>
        <taxon>Euarchontoglires</taxon>
        <taxon>Primates</taxon>
        <taxon>Haplorrhini</taxon>
        <taxon>Catarrhini</taxon>
        <taxon>Hominidae</taxon>
        <taxon>Homo</taxon>
    </lineage>
</organism>
<evidence type="ECO:0000250" key="1"/>
<evidence type="ECO:0000256" key="2">
    <source>
        <dbReference type="SAM" id="MobiDB-lite"/>
    </source>
</evidence>
<evidence type="ECO:0000269" key="3">
    <source>
    </source>
</evidence>
<evidence type="ECO:0000269" key="4">
    <source>
    </source>
</evidence>
<evidence type="ECO:0000269" key="5">
    <source>
    </source>
</evidence>
<evidence type="ECO:0000269" key="6">
    <source>
    </source>
</evidence>
<evidence type="ECO:0000269" key="7">
    <source>
    </source>
</evidence>
<evidence type="ECO:0000269" key="8">
    <source>
    </source>
</evidence>
<evidence type="ECO:0000269" key="9">
    <source>
    </source>
</evidence>
<evidence type="ECO:0000269" key="10">
    <source>
    </source>
</evidence>
<evidence type="ECO:0000269" key="11">
    <source>
    </source>
</evidence>
<evidence type="ECO:0000305" key="12"/>
<evidence type="ECO:0007744" key="13">
    <source>
    </source>
</evidence>
<evidence type="ECO:0007829" key="14">
    <source>
        <dbReference type="PDB" id="7NJ1"/>
    </source>
</evidence>
<reference key="1">
    <citation type="journal article" date="1998" name="Oncogene">
        <title>hPTTG, a human homologue of rat PTTG, is overexpressed in hematopoietic neoplasms. Evidence for a transcriptional activation function of hPTTG.</title>
        <authorList>
            <person name="Dominguez A."/>
            <person name="Ramos-Morales F."/>
            <person name="Romero F."/>
            <person name="Rios R.M."/>
            <person name="Dreyfus F."/>
            <person name="Tortolero M."/>
            <person name="Pintor-Toro J.A."/>
        </authorList>
    </citation>
    <scope>NUCLEOTIDE SEQUENCE [MRNA]</scope>
    <scope>TISSUE SPECIFICITY</scope>
    <source>
        <tissue>Thymus</tissue>
    </source>
</reference>
<reference key="2">
    <citation type="submission" date="1998-09" db="EMBL/GenBank/DDBJ databases">
        <authorList>
            <person name="Mu Y."/>
        </authorList>
    </citation>
    <scope>NUCLEOTIDE SEQUENCE [MRNA]</scope>
    <source>
        <tissue>Pituitary adenoma</tissue>
    </source>
</reference>
<reference key="3">
    <citation type="journal article" date="1999" name="Cytogenet. Cell Genet.">
        <title>Molecular cloning and characterization of the tumor transforming gene (TUTR1): a novel gene in human tumorigenesis.</title>
        <authorList>
            <person name="Kakar S.S."/>
            <person name="Jennes L."/>
        </authorList>
    </citation>
    <scope>NUCLEOTIDE SEQUENCE [MRNA]</scope>
    <scope>DISEASE</scope>
    <source>
        <tissue>Testis</tissue>
    </source>
</reference>
<reference key="4">
    <citation type="journal article" date="1999" name="Gene">
        <title>Molecular cloning, genomic organization, and identification of the promoter for the human pituitary tumor transforming gene (PTTG).</title>
        <authorList>
            <person name="Kakar S.S."/>
        </authorList>
    </citation>
    <scope>NUCLEOTIDE SEQUENCE [GENOMIC DNA]</scope>
</reference>
<reference key="5">
    <citation type="journal article" date="1999" name="Mol. Endocrinol.">
        <title>Structure, expression, and function of human pituitary tumor-transforming gene (PTTG).</title>
        <authorList>
            <person name="Zhang X."/>
            <person name="Horwitz G.A."/>
            <person name="Prezant T.R."/>
            <person name="Valentini A."/>
            <person name="Nakashima M."/>
            <person name="Bronstein M.D."/>
            <person name="Melmed S."/>
        </authorList>
    </citation>
    <scope>NUCLEOTIDE SEQUENCE [MRNA]</scope>
    <scope>DISEASE</scope>
    <scope>MUTAGENESIS OF PRO-163 AND 170-PRO--PRO-173</scope>
    <source>
        <tissue>Fetal liver</tissue>
    </source>
</reference>
<reference key="6">
    <citation type="journal article" date="1999" name="J. Clin. Endocrinol. Metab.">
        <title>Pituitary tumor transforming gene (PTTG) expression in pituitary adenomas.</title>
        <authorList>
            <person name="Zhang X."/>
            <person name="Horwitz G.A."/>
            <person name="Heaney A.P."/>
            <person name="Nakashima M."/>
            <person name="Prezant T.R."/>
            <person name="Bronstein M.D."/>
            <person name="Melmed S."/>
        </authorList>
    </citation>
    <scope>DISEASE</scope>
</reference>
<reference key="7">
    <citation type="journal article" date="1999" name="Science">
        <title>Identification of a vertebrate sister-chromatid separation inhibitor involved in transformation and tumorigenesis.</title>
        <authorList>
            <person name="Zou H."/>
            <person name="McGarry T.J."/>
            <person name="Bernal T."/>
            <person name="Kirschner M.W."/>
        </authorList>
    </citation>
    <scope>FUNCTION</scope>
    <scope>INTERACTION WITH ESPL1</scope>
    <scope>UBIQUITINATION</scope>
    <scope>MUTAGENESIS OF ARG-61 AND LEU-64</scope>
</reference>
<reference key="8">
    <citation type="journal article" date="2000" name="J. Biol. Chem.">
        <title>A novel binding factor facilitates nuclear translocation and transcriptional activation function of the pituitary tumor-transforming gene product.</title>
        <authorList>
            <person name="Chien W."/>
            <person name="Pei L."/>
        </authorList>
    </citation>
    <scope>INTERACTION WITH PTTG1IP</scope>
</reference>
<reference key="9">
    <citation type="journal article" date="2001" name="Nucleic Acids Res.">
        <title>Human securin, hPTTG, is associated with Ku heterodimer, the regulatory subunit of the DNA-dependent protein kinase.</title>
        <authorList>
            <person name="Romero F."/>
            <person name="Multon M.C."/>
            <person name="Ramos-Morales F."/>
            <person name="Dominguez A."/>
            <person name="Bernal J.A."/>
            <person name="Pintor-Toro J.A."/>
            <person name="Tortolero M."/>
        </authorList>
    </citation>
    <scope>FUNCTION</scope>
    <scope>INTERACTION WITH KU</scope>
</reference>
<reference key="10">
    <citation type="journal article" date="2001" name="Cell">
        <title>Securin is required for chromosomal stability in human cells.</title>
        <authorList>
            <person name="Jallepalli P.V."/>
            <person name="Waizenegger I.C."/>
            <person name="Bunz F."/>
            <person name="Langer S."/>
            <person name="Speicher M.R."/>
            <person name="Peters J.-M."/>
            <person name="Kinzler K.W."/>
            <person name="Vogelstein B."/>
            <person name="Lengauer C."/>
        </authorList>
    </citation>
    <scope>FUNCTION</scope>
</reference>
<reference key="11">
    <citation type="journal article" date="2001" name="J. Clin. Endocrinol. Metab.">
        <title>Human pituitary tumor-transforming gene induces angiogenesis.</title>
        <authorList>
            <person name="Ishikawa H."/>
            <person name="Heaney A.P."/>
            <person name="Yu R."/>
            <person name="Horwitz G.A."/>
            <person name="Melmed S."/>
        </authorList>
    </citation>
    <scope>DISEASE</scope>
</reference>
<reference key="12">
    <citation type="journal article" date="2002" name="Nat. Genet.">
        <title>Human securin interacts with p53 and modulates p53-mediated transcriptional activity and apoptosis.</title>
        <authorList>
            <person name="Bernal J.A."/>
            <person name="Luna R."/>
            <person name="Espina A."/>
            <person name="Lazaro I."/>
            <person name="Ramos-Morales F."/>
            <person name="Romero F."/>
            <person name="Arias C."/>
            <person name="Silva A."/>
            <person name="Tortolero M."/>
            <person name="Pintor-Toro J.A."/>
        </authorList>
    </citation>
    <scope>INTERACTION WITH TP53</scope>
    <scope>FUNCTION IN TP53 PATHWAY</scope>
</reference>
<reference key="13">
    <citation type="journal article" date="2000" name="Oncogene">
        <title>Cell cycle regulated expression and phosphorylation of hpttg proto-oncogene product.</title>
        <authorList>
            <person name="Ramos-Morales F."/>
            <person name="Dominguez A."/>
            <person name="Romero F."/>
            <person name="Luna R."/>
            <person name="Multon M.-C."/>
            <person name="Pintor-Toro J.A."/>
            <person name="Tortolero M."/>
        </authorList>
    </citation>
    <scope>PHOSPHORYLATION AT SER-165</scope>
    <scope>MUTAGENESIS OF SER-165</scope>
</reference>
<reference key="14">
    <citation type="journal article" date="2008" name="Cell">
        <title>Mechanism of ubiquitin-chain formation by the human anaphase-promoting complex.</title>
        <authorList>
            <person name="Jin L."/>
            <person name="Williamson A."/>
            <person name="Banerjee S."/>
            <person name="Philipp I."/>
            <person name="Rape M."/>
        </authorList>
    </citation>
    <scope>UBIQUITINATION</scope>
    <scope>DOMAIN TEK-BOX</scope>
</reference>
<reference key="15">
    <citation type="journal article" date="2012" name="Proc. Natl. Acad. Sci. U.S.A.">
        <title>N-terminal acetylome analyses and functional insights of the N-terminal acetyltransferase NatB.</title>
        <authorList>
            <person name="Van Damme P."/>
            <person name="Lasa M."/>
            <person name="Polevoda B."/>
            <person name="Gazquez C."/>
            <person name="Elosegui-Artola A."/>
            <person name="Kim D.S."/>
            <person name="De Juan-Pardo E."/>
            <person name="Demeyer K."/>
            <person name="Hole K."/>
            <person name="Larrea E."/>
            <person name="Timmerman E."/>
            <person name="Prieto J."/>
            <person name="Arnesen T."/>
            <person name="Sherman F."/>
            <person name="Gevaert K."/>
            <person name="Aldabe R."/>
        </authorList>
    </citation>
    <scope>ACETYLATION [LARGE SCALE ANALYSIS] AT ALA-2</scope>
    <scope>CLEAVAGE OF INITIATOR METHIONINE [LARGE SCALE ANALYSIS]</scope>
    <scope>IDENTIFICATION BY MASS SPECTROMETRY [LARGE SCALE ANALYSIS]</scope>
</reference>
<proteinExistence type="evidence at protein level"/>
<name>PTTG1_HUMAN</name>